<proteinExistence type="inferred from homology"/>
<organism>
    <name type="scientific">Geobacillus kaustophilus (strain HTA426)</name>
    <dbReference type="NCBI Taxonomy" id="235909"/>
    <lineage>
        <taxon>Bacteria</taxon>
        <taxon>Bacillati</taxon>
        <taxon>Bacillota</taxon>
        <taxon>Bacilli</taxon>
        <taxon>Bacillales</taxon>
        <taxon>Anoxybacillaceae</taxon>
        <taxon>Geobacillus</taxon>
        <taxon>Geobacillus thermoleovorans group</taxon>
    </lineage>
</organism>
<sequence length="198" mass="22645">MRKSKRERQRLLQETIRENPFITDEELAEKFSVSVQTIRLDRLELSIPELRERIKNVARQSFADKVRALPLEEVIGDIIDIEPDASAISIFDVKEEHVFRRTRIARGHHLFAQANSLAVAVIHDELALTAKATIRFVRQVKEGERVVAKAKVTGKTAHGRTIVEVNSYVGQELVFSGTFEMYRSNIEKKDGDSNEYRG</sequence>
<protein>
    <recommendedName>
        <fullName evidence="1">Transcription factor FapR</fullName>
    </recommendedName>
    <alternativeName>
        <fullName evidence="1">Fatty acid and phospholipid biosynthesis regulator</fullName>
    </alternativeName>
</protein>
<name>FAPR_GEOKA</name>
<reference key="1">
    <citation type="journal article" date="2004" name="Nucleic Acids Res.">
        <title>Thermoadaptation trait revealed by the genome sequence of thermophilic Geobacillus kaustophilus.</title>
        <authorList>
            <person name="Takami H."/>
            <person name="Takaki Y."/>
            <person name="Chee G.-J."/>
            <person name="Nishi S."/>
            <person name="Shimamura S."/>
            <person name="Suzuki H."/>
            <person name="Matsui S."/>
            <person name="Uchiyama I."/>
        </authorList>
    </citation>
    <scope>NUCLEOTIDE SEQUENCE [LARGE SCALE GENOMIC DNA]</scope>
    <source>
        <strain>HTA426</strain>
    </source>
</reference>
<keyword id="KW-0238">DNA-binding</keyword>
<keyword id="KW-0275">Fatty acid biosynthesis</keyword>
<keyword id="KW-0276">Fatty acid metabolism</keyword>
<keyword id="KW-0444">Lipid biosynthesis</keyword>
<keyword id="KW-0443">Lipid metabolism</keyword>
<keyword id="KW-1185">Reference proteome</keyword>
<keyword id="KW-0678">Repressor</keyword>
<keyword id="KW-0804">Transcription</keyword>
<keyword id="KW-0805">Transcription regulation</keyword>
<gene>
    <name evidence="1" type="primary">fapR</name>
    <name type="ordered locus">GK1187</name>
</gene>
<evidence type="ECO:0000255" key="1">
    <source>
        <dbReference type="HAMAP-Rule" id="MF_01814"/>
    </source>
</evidence>
<dbReference type="EMBL" id="BA000043">
    <property type="protein sequence ID" value="BAD75472.1"/>
    <property type="molecule type" value="Genomic_DNA"/>
</dbReference>
<dbReference type="RefSeq" id="WP_011230687.1">
    <property type="nucleotide sequence ID" value="NC_006510.1"/>
</dbReference>
<dbReference type="SMR" id="Q5L0Q8"/>
<dbReference type="STRING" id="235909.GK1187"/>
<dbReference type="GeneID" id="32063081"/>
<dbReference type="KEGG" id="gka:GK1187"/>
<dbReference type="eggNOG" id="COG1349">
    <property type="taxonomic scope" value="Bacteria"/>
</dbReference>
<dbReference type="eggNOG" id="COG2050">
    <property type="taxonomic scope" value="Bacteria"/>
</dbReference>
<dbReference type="HOGENOM" id="CLU_095708_0_0_9"/>
<dbReference type="Proteomes" id="UP000001172">
    <property type="component" value="Chromosome"/>
</dbReference>
<dbReference type="GO" id="GO:0003677">
    <property type="term" value="F:DNA binding"/>
    <property type="evidence" value="ECO:0007669"/>
    <property type="project" value="UniProtKB-KW"/>
</dbReference>
<dbReference type="GO" id="GO:0003700">
    <property type="term" value="F:DNA-binding transcription factor activity"/>
    <property type="evidence" value="ECO:0007669"/>
    <property type="project" value="UniProtKB-UniRule"/>
</dbReference>
<dbReference type="GO" id="GO:0006633">
    <property type="term" value="P:fatty acid biosynthetic process"/>
    <property type="evidence" value="ECO:0007669"/>
    <property type="project" value="UniProtKB-KW"/>
</dbReference>
<dbReference type="GO" id="GO:0045892">
    <property type="term" value="P:negative regulation of DNA-templated transcription"/>
    <property type="evidence" value="ECO:0007669"/>
    <property type="project" value="UniProtKB-UniRule"/>
</dbReference>
<dbReference type="GO" id="GO:0045717">
    <property type="term" value="P:negative regulation of fatty acid biosynthetic process"/>
    <property type="evidence" value="ECO:0007669"/>
    <property type="project" value="UniProtKB-UniRule"/>
</dbReference>
<dbReference type="CDD" id="cd03440">
    <property type="entry name" value="hot_dog"/>
    <property type="match status" value="1"/>
</dbReference>
<dbReference type="Gene3D" id="3.10.129.10">
    <property type="entry name" value="Hotdog Thioesterase"/>
    <property type="match status" value="1"/>
</dbReference>
<dbReference type="Gene3D" id="1.10.10.10">
    <property type="entry name" value="Winged helix-like DNA-binding domain superfamily/Winged helix DNA-binding domain"/>
    <property type="match status" value="1"/>
</dbReference>
<dbReference type="HAMAP" id="MF_01814">
    <property type="entry name" value="Transcrip_fact_FapR"/>
    <property type="match status" value="1"/>
</dbReference>
<dbReference type="InterPro" id="IPR001034">
    <property type="entry name" value="DeoR_HTH"/>
</dbReference>
<dbReference type="InterPro" id="IPR029069">
    <property type="entry name" value="HotDog_dom_sf"/>
</dbReference>
<dbReference type="InterPro" id="IPR017275">
    <property type="entry name" value="Transcription_factor_FapR"/>
</dbReference>
<dbReference type="InterPro" id="IPR036388">
    <property type="entry name" value="WH-like_DNA-bd_sf"/>
</dbReference>
<dbReference type="InterPro" id="IPR036390">
    <property type="entry name" value="WH_DNA-bd_sf"/>
</dbReference>
<dbReference type="NCBIfam" id="NF003359">
    <property type="entry name" value="PRK04424.1"/>
    <property type="match status" value="1"/>
</dbReference>
<dbReference type="Pfam" id="PF08220">
    <property type="entry name" value="HTH_DeoR"/>
    <property type="match status" value="1"/>
</dbReference>
<dbReference type="PIRSF" id="PIRSF037733">
    <property type="entry name" value="Transcription_factor_FapR"/>
    <property type="match status" value="1"/>
</dbReference>
<dbReference type="SUPFAM" id="SSF54637">
    <property type="entry name" value="Thioesterase/thiol ester dehydrase-isomerase"/>
    <property type="match status" value="1"/>
</dbReference>
<dbReference type="SUPFAM" id="SSF46785">
    <property type="entry name" value="Winged helix' DNA-binding domain"/>
    <property type="match status" value="1"/>
</dbReference>
<comment type="function">
    <text evidence="1">Transcriptional factor involved in regulation of membrane lipid biosynthesis by repressing genes involved in fatty acid and phospholipid metabolism.</text>
</comment>
<comment type="similarity">
    <text evidence="1">Belongs to the FapR family.</text>
</comment>
<accession>Q5L0Q8</accession>
<feature type="chain" id="PRO_0000172822" description="Transcription factor FapR">
    <location>
        <begin position="1"/>
        <end position="198"/>
    </location>
</feature>
<feature type="domain" description="MaoC-like">
    <location>
        <begin position="102"/>
        <end position="167"/>
    </location>
</feature>